<organism>
    <name type="scientific">Mycoplasma genitalium (strain ATCC 33530 / DSM 19775 / NCTC 10195 / G37)</name>
    <name type="common">Mycoplasmoides genitalium</name>
    <dbReference type="NCBI Taxonomy" id="243273"/>
    <lineage>
        <taxon>Bacteria</taxon>
        <taxon>Bacillati</taxon>
        <taxon>Mycoplasmatota</taxon>
        <taxon>Mycoplasmoidales</taxon>
        <taxon>Mycoplasmoidaceae</taxon>
        <taxon>Mycoplasmoides</taxon>
    </lineage>
</organism>
<name>ATPB_MYCGE</name>
<reference key="1">
    <citation type="journal article" date="1995" name="Science">
        <title>The minimal gene complement of Mycoplasma genitalium.</title>
        <authorList>
            <person name="Fraser C.M."/>
            <person name="Gocayne J.D."/>
            <person name="White O."/>
            <person name="Adams M.D."/>
            <person name="Clayton R.A."/>
            <person name="Fleischmann R.D."/>
            <person name="Bult C.J."/>
            <person name="Kerlavage A.R."/>
            <person name="Sutton G.G."/>
            <person name="Kelley J.M."/>
            <person name="Fritchman J.L."/>
            <person name="Weidman J.F."/>
            <person name="Small K.V."/>
            <person name="Sandusky M."/>
            <person name="Fuhrmann J.L."/>
            <person name="Nguyen D.T."/>
            <person name="Utterback T.R."/>
            <person name="Saudek D.M."/>
            <person name="Phillips C.A."/>
            <person name="Merrick J.M."/>
            <person name="Tomb J.-F."/>
            <person name="Dougherty B.A."/>
            <person name="Bott K.F."/>
            <person name="Hu P.-C."/>
            <person name="Lucier T.S."/>
            <person name="Peterson S.N."/>
            <person name="Smith H.O."/>
            <person name="Hutchison C.A. III"/>
            <person name="Venter J.C."/>
        </authorList>
    </citation>
    <scope>NUCLEOTIDE SEQUENCE [LARGE SCALE GENOMIC DNA]</scope>
    <source>
        <strain>ATCC 33530 / DSM 19775 / NCTC 10195 / G37</strain>
    </source>
</reference>
<reference key="2">
    <citation type="journal article" date="1993" name="J. Bacteriol.">
        <title>A survey of the Mycoplasma genitalium genome by using random sequencing.</title>
        <authorList>
            <person name="Peterson S.N."/>
            <person name="Hu P.-C."/>
            <person name="Bott K.F."/>
            <person name="Hutchison C.A. III"/>
        </authorList>
    </citation>
    <scope>NUCLEOTIDE SEQUENCE [GENOMIC DNA] OF 244-378</scope>
    <source>
        <strain>ATCC 33530 / DSM 19775 / NCTC 10195 / G37</strain>
    </source>
</reference>
<accession>P47639</accession>
<evidence type="ECO:0000255" key="1">
    <source>
        <dbReference type="HAMAP-Rule" id="MF_01347"/>
    </source>
</evidence>
<keyword id="KW-0066">ATP synthesis</keyword>
<keyword id="KW-0067">ATP-binding</keyword>
<keyword id="KW-1003">Cell membrane</keyword>
<keyword id="KW-0139">CF(1)</keyword>
<keyword id="KW-0375">Hydrogen ion transport</keyword>
<keyword id="KW-0406">Ion transport</keyword>
<keyword id="KW-0472">Membrane</keyword>
<keyword id="KW-0547">Nucleotide-binding</keyword>
<keyword id="KW-1185">Reference proteome</keyword>
<keyword id="KW-1278">Translocase</keyword>
<keyword id="KW-0813">Transport</keyword>
<proteinExistence type="inferred from homology"/>
<dbReference type="EC" id="7.1.2.2" evidence="1"/>
<dbReference type="EMBL" id="L43967">
    <property type="protein sequence ID" value="AAC71627.1"/>
    <property type="molecule type" value="Genomic_DNA"/>
</dbReference>
<dbReference type="EMBL" id="U01752">
    <property type="protein sequence ID" value="AAD10566.1"/>
    <property type="molecule type" value="Genomic_DNA"/>
</dbReference>
<dbReference type="SMR" id="P47639"/>
<dbReference type="FunCoup" id="P47639">
    <property type="interactions" value="148"/>
</dbReference>
<dbReference type="STRING" id="243273.MG_399"/>
<dbReference type="KEGG" id="mge:MG_399"/>
<dbReference type="eggNOG" id="COG0055">
    <property type="taxonomic scope" value="Bacteria"/>
</dbReference>
<dbReference type="HOGENOM" id="CLU_022398_0_2_14"/>
<dbReference type="InParanoid" id="P47639"/>
<dbReference type="Proteomes" id="UP000000807">
    <property type="component" value="Chromosome"/>
</dbReference>
<dbReference type="GO" id="GO:0005886">
    <property type="term" value="C:plasma membrane"/>
    <property type="evidence" value="ECO:0007669"/>
    <property type="project" value="UniProtKB-SubCell"/>
</dbReference>
<dbReference type="GO" id="GO:0045259">
    <property type="term" value="C:proton-transporting ATP synthase complex"/>
    <property type="evidence" value="ECO:0007669"/>
    <property type="project" value="UniProtKB-KW"/>
</dbReference>
<dbReference type="GO" id="GO:0005524">
    <property type="term" value="F:ATP binding"/>
    <property type="evidence" value="ECO:0007669"/>
    <property type="project" value="UniProtKB-UniRule"/>
</dbReference>
<dbReference type="GO" id="GO:0016887">
    <property type="term" value="F:ATP hydrolysis activity"/>
    <property type="evidence" value="ECO:0007669"/>
    <property type="project" value="InterPro"/>
</dbReference>
<dbReference type="GO" id="GO:0046933">
    <property type="term" value="F:proton-transporting ATP synthase activity, rotational mechanism"/>
    <property type="evidence" value="ECO:0007669"/>
    <property type="project" value="UniProtKB-UniRule"/>
</dbReference>
<dbReference type="CDD" id="cd18110">
    <property type="entry name" value="ATP-synt_F1_beta_C"/>
    <property type="match status" value="1"/>
</dbReference>
<dbReference type="CDD" id="cd18115">
    <property type="entry name" value="ATP-synt_F1_beta_N"/>
    <property type="match status" value="1"/>
</dbReference>
<dbReference type="CDD" id="cd01133">
    <property type="entry name" value="F1-ATPase_beta_CD"/>
    <property type="match status" value="1"/>
</dbReference>
<dbReference type="FunFam" id="1.10.1140.10:FF:000001">
    <property type="entry name" value="ATP synthase subunit beta"/>
    <property type="match status" value="1"/>
</dbReference>
<dbReference type="FunFam" id="3.40.50.300:FF:000004">
    <property type="entry name" value="ATP synthase subunit beta"/>
    <property type="match status" value="1"/>
</dbReference>
<dbReference type="Gene3D" id="2.40.10.170">
    <property type="match status" value="1"/>
</dbReference>
<dbReference type="Gene3D" id="1.10.1140.10">
    <property type="entry name" value="Bovine Mitochondrial F1-atpase, Atp Synthase Beta Chain, Chain D, domain 3"/>
    <property type="match status" value="1"/>
</dbReference>
<dbReference type="Gene3D" id="3.40.50.300">
    <property type="entry name" value="P-loop containing nucleotide triphosphate hydrolases"/>
    <property type="match status" value="1"/>
</dbReference>
<dbReference type="HAMAP" id="MF_01347">
    <property type="entry name" value="ATP_synth_beta_bact"/>
    <property type="match status" value="1"/>
</dbReference>
<dbReference type="InterPro" id="IPR003593">
    <property type="entry name" value="AAA+_ATPase"/>
</dbReference>
<dbReference type="InterPro" id="IPR055190">
    <property type="entry name" value="ATP-synt_VA_C"/>
</dbReference>
<dbReference type="InterPro" id="IPR005722">
    <property type="entry name" value="ATP_synth_F1_bsu"/>
</dbReference>
<dbReference type="InterPro" id="IPR020003">
    <property type="entry name" value="ATPase_a/bsu_AS"/>
</dbReference>
<dbReference type="InterPro" id="IPR050053">
    <property type="entry name" value="ATPase_alpha/beta_chains"/>
</dbReference>
<dbReference type="InterPro" id="IPR004100">
    <property type="entry name" value="ATPase_F1/V1/A1_a/bsu_N"/>
</dbReference>
<dbReference type="InterPro" id="IPR036121">
    <property type="entry name" value="ATPase_F1/V1/A1_a/bsu_N_sf"/>
</dbReference>
<dbReference type="InterPro" id="IPR000194">
    <property type="entry name" value="ATPase_F1/V1/A1_a/bsu_nucl-bd"/>
</dbReference>
<dbReference type="InterPro" id="IPR024034">
    <property type="entry name" value="ATPase_F1/V1_b/a_C"/>
</dbReference>
<dbReference type="InterPro" id="IPR027417">
    <property type="entry name" value="P-loop_NTPase"/>
</dbReference>
<dbReference type="NCBIfam" id="TIGR01039">
    <property type="entry name" value="atpD"/>
    <property type="match status" value="1"/>
</dbReference>
<dbReference type="PANTHER" id="PTHR15184">
    <property type="entry name" value="ATP SYNTHASE"/>
    <property type="match status" value="1"/>
</dbReference>
<dbReference type="PANTHER" id="PTHR15184:SF71">
    <property type="entry name" value="ATP SYNTHASE SUBUNIT BETA, MITOCHONDRIAL"/>
    <property type="match status" value="1"/>
</dbReference>
<dbReference type="Pfam" id="PF00006">
    <property type="entry name" value="ATP-synt_ab"/>
    <property type="match status" value="1"/>
</dbReference>
<dbReference type="Pfam" id="PF02874">
    <property type="entry name" value="ATP-synt_ab_N"/>
    <property type="match status" value="1"/>
</dbReference>
<dbReference type="Pfam" id="PF22919">
    <property type="entry name" value="ATP-synt_VA_C"/>
    <property type="match status" value="1"/>
</dbReference>
<dbReference type="SMART" id="SM00382">
    <property type="entry name" value="AAA"/>
    <property type="match status" value="1"/>
</dbReference>
<dbReference type="SUPFAM" id="SSF47917">
    <property type="entry name" value="C-terminal domain of alpha and beta subunits of F1 ATP synthase"/>
    <property type="match status" value="1"/>
</dbReference>
<dbReference type="SUPFAM" id="SSF50615">
    <property type="entry name" value="N-terminal domain of alpha and beta subunits of F1 ATP synthase"/>
    <property type="match status" value="1"/>
</dbReference>
<dbReference type="SUPFAM" id="SSF52540">
    <property type="entry name" value="P-loop containing nucleoside triphosphate hydrolases"/>
    <property type="match status" value="1"/>
</dbReference>
<dbReference type="PROSITE" id="PS00152">
    <property type="entry name" value="ATPASE_ALPHA_BETA"/>
    <property type="match status" value="1"/>
</dbReference>
<comment type="function">
    <text evidence="1">Produces ATP from ADP in the presence of a proton gradient across the membrane. The catalytic sites are hosted primarily by the beta subunits.</text>
</comment>
<comment type="catalytic activity">
    <reaction evidence="1">
        <text>ATP + H2O + 4 H(+)(in) = ADP + phosphate + 5 H(+)(out)</text>
        <dbReference type="Rhea" id="RHEA:57720"/>
        <dbReference type="ChEBI" id="CHEBI:15377"/>
        <dbReference type="ChEBI" id="CHEBI:15378"/>
        <dbReference type="ChEBI" id="CHEBI:30616"/>
        <dbReference type="ChEBI" id="CHEBI:43474"/>
        <dbReference type="ChEBI" id="CHEBI:456216"/>
        <dbReference type="EC" id="7.1.2.2"/>
    </reaction>
</comment>
<comment type="subunit">
    <text evidence="1">F-type ATPases have 2 components, CF(1) - the catalytic core - and CF(0) - the membrane proton channel. CF(1) has five subunits: alpha(3), beta(3), gamma(1), delta(1), epsilon(1). CF(0) has three main subunits: a(1), b(2) and c(9-12). The alpha and beta chains form an alternating ring which encloses part of the gamma chain. CF(1) is attached to CF(0) by a central stalk formed by the gamma and epsilon chains, while a peripheral stalk is formed by the delta and b chains.</text>
</comment>
<comment type="subcellular location">
    <subcellularLocation>
        <location evidence="1">Cell membrane</location>
        <topology evidence="1">Peripheral membrane protein</topology>
    </subcellularLocation>
</comment>
<comment type="similarity">
    <text evidence="1">Belongs to the ATPase alpha/beta chains family.</text>
</comment>
<protein>
    <recommendedName>
        <fullName evidence="1">ATP synthase subunit beta</fullName>
        <ecNumber evidence="1">7.1.2.2</ecNumber>
    </recommendedName>
    <alternativeName>
        <fullName evidence="1">ATP synthase F1 sector subunit beta</fullName>
    </alternativeName>
    <alternativeName>
        <fullName evidence="1">F-ATPase subunit beta</fullName>
    </alternativeName>
</protein>
<gene>
    <name evidence="1" type="primary">atpD</name>
    <name type="ordered locus">MG399</name>
</gene>
<sequence>MIKKENLTYGKVHQVIGPVVDVIFSESKQLPRVYDCLSVQLKKSELFLEATQLIGDDIVRCIALGPTEGLARNVKVTNYNHPIEVPVGKNVLGRMFNVLGEPIDGKEPLPKKPKLSIHRNPPAFDEQPNTVDIFETGIKVIDLLTPYVRGGKIGLFGGAGVGKTVLVQELIHNIAKEHSGLSVFAGVGERTREGNDLYYEMIQGGVIDKTVLVFGQMNEPPGARMRVALTALTMAEYFRDHDNQNVLLFIDNIFRFTQAGSEVSALLGRMPSAVGYQPTLAIEMGKLQERIASTKTGSITSVQAIYVPADDLTDPAPATTFTHLDAKTVLDRNIAALGIFPAINPLESTSRLLDPSVVGINHYKVALGVQNILQRFAELQDIIAILGIDELSDEDKIIVERARRIRNFLSQPFFVAEKFSGIAGKYVSLNDTVQSFKEILEGKHDHLPEQAFFYVGTIQEAVEKAKRLNQEFDKTK</sequence>
<feature type="chain" id="PRO_0000144451" description="ATP synthase subunit beta">
    <location>
        <begin position="1"/>
        <end position="476"/>
    </location>
</feature>
<feature type="binding site" evidence="1">
    <location>
        <begin position="157"/>
        <end position="164"/>
    </location>
    <ligand>
        <name>ATP</name>
        <dbReference type="ChEBI" id="CHEBI:30616"/>
    </ligand>
</feature>